<sequence length="416" mass="47841">MSTNIKIIKKVLNGYVGFANLPKQWHRKSIRRGFSLNIMAIGESGLGKATLINTLFNRDIITSQHDSDEFDEGEEEDVSVKIKSTQAEIEEDGVKLKVSVITAPGFGESINNVEAWKPIVDEINSRFDSYLEAESRINRTAVVDNRVHAFLYFIEPTGHSLRALDIALMKQVHEKVNLIPVIAKSDTLTDEEILEFKHRILADISHQGIKIFKPTDFEYDEEESANTRSIIDSFPFAVVGSTNEVQTPDGRLVRGRKYPWGVIEVDNENHNDFVKLRQLLVRNFLEELKEHTANVLYENYRTEKLKRMGIEQDNTVFREFDPAAKQEEERALHEAKLAKMEAEMKSVFQQKVSEKEKKLQRSEADLFARHKEMKDKLTKQIKLLEEKKAQLEKQKLLPQDPPAQPAPQKSRKGFLR</sequence>
<organism>
    <name type="scientific">Candida albicans</name>
    <name type="common">Yeast</name>
    <dbReference type="NCBI Taxonomy" id="5476"/>
    <lineage>
        <taxon>Eukaryota</taxon>
        <taxon>Fungi</taxon>
        <taxon>Dikarya</taxon>
        <taxon>Ascomycota</taxon>
        <taxon>Saccharomycotina</taxon>
        <taxon>Pichiomycetes</taxon>
        <taxon>Debaryomycetaceae</taxon>
        <taxon>Candida/Lodderomyces clade</taxon>
        <taxon>Candida</taxon>
    </lineage>
</organism>
<protein>
    <recommendedName>
        <fullName>Cell division control protein 3</fullName>
    </recommendedName>
</protein>
<name>CDC3_CANAX</name>
<keyword id="KW-0131">Cell cycle</keyword>
<keyword id="KW-0132">Cell division</keyword>
<keyword id="KW-0175">Coiled coil</keyword>
<keyword id="KW-0342">GTP-binding</keyword>
<keyword id="KW-0547">Nucleotide-binding</keyword>
<reference key="1">
    <citation type="journal article" date="1994" name="Mol. Gen. Genet.">
        <title>Homologs of the yeast neck filament associated genes: isolation and sequence analysis of Candida albicans CDC3 and CDC10.</title>
        <authorList>
            <person name="Didomenico B.J."/>
            <person name="Brown N.H."/>
            <person name="Lupisella J."/>
            <person name="Greene J.R."/>
            <person name="Yanko M."/>
            <person name="Koltin Y."/>
        </authorList>
    </citation>
    <scope>NUCLEOTIDE SEQUENCE [GENOMIC DNA]</scope>
    <source>
        <strain>C792</strain>
    </source>
</reference>
<proteinExistence type="inferred from homology"/>
<comment type="function">
    <text>Plays a role in the cell cycle. Involved in the formation of the ring of filaments in the neck region at the mother-bud junction during mitosis.</text>
</comment>
<comment type="subcellular location">
    <subcellularLocation>
        <location evidence="1">Bud neck</location>
    </subcellularLocation>
    <text evidence="1">Present at the bud neck during cell division.</text>
</comment>
<comment type="similarity">
    <text evidence="3">Belongs to the TRAFAC class TrmE-Era-EngA-EngB-Septin-like GTPase superfamily. Septin GTPase family.</text>
</comment>
<gene>
    <name type="primary">CDC3</name>
</gene>
<evidence type="ECO:0000250" key="1"/>
<evidence type="ECO:0000255" key="2"/>
<evidence type="ECO:0000255" key="3">
    <source>
        <dbReference type="PROSITE-ProRule" id="PRU01056"/>
    </source>
</evidence>
<evidence type="ECO:0000256" key="4">
    <source>
        <dbReference type="SAM" id="MobiDB-lite"/>
    </source>
</evidence>
<feature type="chain" id="PRO_0000173495" description="Cell division control protein 3">
    <location>
        <begin position="1"/>
        <end position="416"/>
    </location>
</feature>
<feature type="domain" description="Septin-type G" evidence="3">
    <location>
        <begin position="32"/>
        <end position="307"/>
    </location>
</feature>
<feature type="region of interest" description="G1 motif" evidence="3">
    <location>
        <begin position="42"/>
        <end position="49"/>
    </location>
</feature>
<feature type="region of interest" description="G3 motif" evidence="3">
    <location>
        <begin position="102"/>
        <end position="105"/>
    </location>
</feature>
<feature type="region of interest" description="G4 motif" evidence="3">
    <location>
        <begin position="183"/>
        <end position="186"/>
    </location>
</feature>
<feature type="region of interest" description="Disordered" evidence="4">
    <location>
        <begin position="392"/>
        <end position="416"/>
    </location>
</feature>
<feature type="coiled-coil region" evidence="2">
    <location>
        <begin position="323"/>
        <end position="399"/>
    </location>
</feature>
<feature type="binding site" evidence="1">
    <location>
        <begin position="42"/>
        <end position="49"/>
    </location>
    <ligand>
        <name>GTP</name>
        <dbReference type="ChEBI" id="CHEBI:37565"/>
    </ligand>
</feature>
<feature type="binding site" evidence="1">
    <location>
        <position position="79"/>
    </location>
    <ligand>
        <name>GTP</name>
        <dbReference type="ChEBI" id="CHEBI:37565"/>
    </ligand>
</feature>
<feature type="binding site" evidence="1">
    <location>
        <position position="105"/>
    </location>
    <ligand>
        <name>GTP</name>
        <dbReference type="ChEBI" id="CHEBI:37565"/>
    </ligand>
</feature>
<feature type="binding site" evidence="1">
    <location>
        <begin position="184"/>
        <end position="192"/>
    </location>
    <ligand>
        <name>GTP</name>
        <dbReference type="ChEBI" id="CHEBI:37565"/>
    </ligand>
</feature>
<feature type="binding site" evidence="1">
    <location>
        <position position="240"/>
    </location>
    <ligand>
        <name>GTP</name>
        <dbReference type="ChEBI" id="CHEBI:37565"/>
    </ligand>
</feature>
<feature type="binding site" evidence="1">
    <location>
        <position position="256"/>
    </location>
    <ligand>
        <name>GTP</name>
        <dbReference type="ChEBI" id="CHEBI:37565"/>
    </ligand>
</feature>
<accession>P39826</accession>
<dbReference type="EMBL" id="Z25869">
    <property type="protein sequence ID" value="CAA81089.1"/>
    <property type="molecule type" value="Genomic_DNA"/>
</dbReference>
<dbReference type="PIR" id="S43279">
    <property type="entry name" value="S43279"/>
</dbReference>
<dbReference type="SMR" id="P39826"/>
<dbReference type="EnsemblFungi" id="C1_04210C_A-T">
    <property type="protein sequence ID" value="C1_04210C_A-T-p1"/>
    <property type="gene ID" value="C1_04210C_A"/>
</dbReference>
<dbReference type="VEuPathDB" id="FungiDB:C1_04210C_A"/>
<dbReference type="VEuPathDB" id="FungiDB:CAWG_00972"/>
<dbReference type="GO" id="GO:0005619">
    <property type="term" value="C:ascospore wall"/>
    <property type="evidence" value="ECO:0007669"/>
    <property type="project" value="EnsemblFungi"/>
</dbReference>
<dbReference type="GO" id="GO:1990317">
    <property type="term" value="C:Gin4 complex"/>
    <property type="evidence" value="ECO:0007669"/>
    <property type="project" value="EnsemblFungi"/>
</dbReference>
<dbReference type="GO" id="GO:0001400">
    <property type="term" value="C:mating projection base"/>
    <property type="evidence" value="ECO:0007669"/>
    <property type="project" value="EnsemblFungi"/>
</dbReference>
<dbReference type="GO" id="GO:0005628">
    <property type="term" value="C:prospore membrane"/>
    <property type="evidence" value="ECO:0007669"/>
    <property type="project" value="EnsemblFungi"/>
</dbReference>
<dbReference type="GO" id="GO:0031105">
    <property type="term" value="C:septin complex"/>
    <property type="evidence" value="ECO:0007669"/>
    <property type="project" value="EnsemblFungi"/>
</dbReference>
<dbReference type="GO" id="GO:0032160">
    <property type="term" value="C:septin filament array"/>
    <property type="evidence" value="ECO:0007669"/>
    <property type="project" value="EnsemblFungi"/>
</dbReference>
<dbReference type="GO" id="GO:0005525">
    <property type="term" value="F:GTP binding"/>
    <property type="evidence" value="ECO:0007669"/>
    <property type="project" value="UniProtKB-KW"/>
</dbReference>
<dbReference type="GO" id="GO:0070273">
    <property type="term" value="F:phosphatidylinositol-4-phosphate binding"/>
    <property type="evidence" value="ECO:0007669"/>
    <property type="project" value="EnsemblFungi"/>
</dbReference>
<dbReference type="GO" id="GO:0010314">
    <property type="term" value="F:phosphatidylinositol-5-phosphate binding"/>
    <property type="evidence" value="ECO:0007669"/>
    <property type="project" value="EnsemblFungi"/>
</dbReference>
<dbReference type="GO" id="GO:0005200">
    <property type="term" value="F:structural constituent of cytoskeleton"/>
    <property type="evidence" value="ECO:0007669"/>
    <property type="project" value="EnsemblFungi"/>
</dbReference>
<dbReference type="GO" id="GO:0000281">
    <property type="term" value="P:mitotic cytokinesis"/>
    <property type="evidence" value="ECO:0007669"/>
    <property type="project" value="EnsemblFungi"/>
</dbReference>
<dbReference type="GO" id="GO:0000921">
    <property type="term" value="P:septin ring assembly"/>
    <property type="evidence" value="ECO:0007669"/>
    <property type="project" value="EnsemblFungi"/>
</dbReference>
<dbReference type="GO" id="GO:0031107">
    <property type="term" value="P:septin ring disassembly"/>
    <property type="evidence" value="ECO:0007669"/>
    <property type="project" value="EnsemblFungi"/>
</dbReference>
<dbReference type="CDD" id="cd01850">
    <property type="entry name" value="CDC_Septin"/>
    <property type="match status" value="1"/>
</dbReference>
<dbReference type="FunFam" id="3.40.50.300:FF:000196">
    <property type="entry name" value="Cell division control 3"/>
    <property type="match status" value="1"/>
</dbReference>
<dbReference type="Gene3D" id="3.40.50.300">
    <property type="entry name" value="P-loop containing nucleotide triphosphate hydrolases"/>
    <property type="match status" value="1"/>
</dbReference>
<dbReference type="InterPro" id="IPR030379">
    <property type="entry name" value="G_SEPTIN_dom"/>
</dbReference>
<dbReference type="InterPro" id="IPR027417">
    <property type="entry name" value="P-loop_NTPase"/>
</dbReference>
<dbReference type="InterPro" id="IPR016491">
    <property type="entry name" value="Septin"/>
</dbReference>
<dbReference type="PANTHER" id="PTHR18884">
    <property type="entry name" value="SEPTIN"/>
    <property type="match status" value="1"/>
</dbReference>
<dbReference type="Pfam" id="PF00735">
    <property type="entry name" value="Septin"/>
    <property type="match status" value="1"/>
</dbReference>
<dbReference type="PIRSF" id="PIRSF006698">
    <property type="entry name" value="Septin"/>
    <property type="match status" value="1"/>
</dbReference>
<dbReference type="SUPFAM" id="SSF52540">
    <property type="entry name" value="P-loop containing nucleoside triphosphate hydrolases"/>
    <property type="match status" value="1"/>
</dbReference>
<dbReference type="PROSITE" id="PS51719">
    <property type="entry name" value="G_SEPTIN"/>
    <property type="match status" value="1"/>
</dbReference>